<proteinExistence type="inferred from homology"/>
<organism>
    <name type="scientific">Shigella boydii serotype 18 (strain CDC 3083-94 / BS512)</name>
    <dbReference type="NCBI Taxonomy" id="344609"/>
    <lineage>
        <taxon>Bacteria</taxon>
        <taxon>Pseudomonadati</taxon>
        <taxon>Pseudomonadota</taxon>
        <taxon>Gammaproteobacteria</taxon>
        <taxon>Enterobacterales</taxon>
        <taxon>Enterobacteriaceae</taxon>
        <taxon>Shigella</taxon>
    </lineage>
</organism>
<dbReference type="EMBL" id="CP001063">
    <property type="protein sequence ID" value="ACD10115.1"/>
    <property type="molecule type" value="Genomic_DNA"/>
</dbReference>
<dbReference type="RefSeq" id="WP_000103754.1">
    <property type="nucleotide sequence ID" value="NC_010658.1"/>
</dbReference>
<dbReference type="SMR" id="B2U527"/>
<dbReference type="STRING" id="344609.SbBS512_E2230"/>
<dbReference type="GeneID" id="98387866"/>
<dbReference type="KEGG" id="sbc:SbBS512_E2230"/>
<dbReference type="HOGENOM" id="CLU_108696_5_1_6"/>
<dbReference type="UniPathway" id="UPA00094"/>
<dbReference type="Proteomes" id="UP000001030">
    <property type="component" value="Chromosome"/>
</dbReference>
<dbReference type="GO" id="GO:0005829">
    <property type="term" value="C:cytosol"/>
    <property type="evidence" value="ECO:0007669"/>
    <property type="project" value="TreeGrafter"/>
</dbReference>
<dbReference type="GO" id="GO:0016020">
    <property type="term" value="C:membrane"/>
    <property type="evidence" value="ECO:0007669"/>
    <property type="project" value="GOC"/>
</dbReference>
<dbReference type="GO" id="GO:0000035">
    <property type="term" value="F:acyl binding"/>
    <property type="evidence" value="ECO:0007669"/>
    <property type="project" value="TreeGrafter"/>
</dbReference>
<dbReference type="GO" id="GO:0000036">
    <property type="term" value="F:acyl carrier activity"/>
    <property type="evidence" value="ECO:0007669"/>
    <property type="project" value="UniProtKB-UniRule"/>
</dbReference>
<dbReference type="GO" id="GO:0009245">
    <property type="term" value="P:lipid A biosynthetic process"/>
    <property type="evidence" value="ECO:0007669"/>
    <property type="project" value="TreeGrafter"/>
</dbReference>
<dbReference type="FunFam" id="1.10.1200.10:FF:000001">
    <property type="entry name" value="Acyl carrier protein"/>
    <property type="match status" value="1"/>
</dbReference>
<dbReference type="Gene3D" id="1.10.1200.10">
    <property type="entry name" value="ACP-like"/>
    <property type="match status" value="1"/>
</dbReference>
<dbReference type="HAMAP" id="MF_01217">
    <property type="entry name" value="Acyl_carrier"/>
    <property type="match status" value="1"/>
</dbReference>
<dbReference type="InterPro" id="IPR003231">
    <property type="entry name" value="ACP"/>
</dbReference>
<dbReference type="InterPro" id="IPR036736">
    <property type="entry name" value="ACP-like_sf"/>
</dbReference>
<dbReference type="InterPro" id="IPR009081">
    <property type="entry name" value="PP-bd_ACP"/>
</dbReference>
<dbReference type="InterPro" id="IPR006162">
    <property type="entry name" value="Ppantetheine_attach_site"/>
</dbReference>
<dbReference type="NCBIfam" id="TIGR00517">
    <property type="entry name" value="acyl_carrier"/>
    <property type="match status" value="1"/>
</dbReference>
<dbReference type="NCBIfam" id="NF002148">
    <property type="entry name" value="PRK00982.1-2"/>
    <property type="match status" value="1"/>
</dbReference>
<dbReference type="NCBIfam" id="NF002149">
    <property type="entry name" value="PRK00982.1-3"/>
    <property type="match status" value="1"/>
</dbReference>
<dbReference type="NCBIfam" id="NF002150">
    <property type="entry name" value="PRK00982.1-4"/>
    <property type="match status" value="1"/>
</dbReference>
<dbReference type="NCBIfam" id="NF002151">
    <property type="entry name" value="PRK00982.1-5"/>
    <property type="match status" value="1"/>
</dbReference>
<dbReference type="PANTHER" id="PTHR20863">
    <property type="entry name" value="ACYL CARRIER PROTEIN"/>
    <property type="match status" value="1"/>
</dbReference>
<dbReference type="PANTHER" id="PTHR20863:SF76">
    <property type="entry name" value="CARRIER DOMAIN-CONTAINING PROTEIN"/>
    <property type="match status" value="1"/>
</dbReference>
<dbReference type="Pfam" id="PF00550">
    <property type="entry name" value="PP-binding"/>
    <property type="match status" value="1"/>
</dbReference>
<dbReference type="SUPFAM" id="SSF47336">
    <property type="entry name" value="ACP-like"/>
    <property type="match status" value="1"/>
</dbReference>
<dbReference type="PROSITE" id="PS50075">
    <property type="entry name" value="CARRIER"/>
    <property type="match status" value="1"/>
</dbReference>
<dbReference type="PROSITE" id="PS00012">
    <property type="entry name" value="PHOSPHOPANTETHEINE"/>
    <property type="match status" value="1"/>
</dbReference>
<protein>
    <recommendedName>
        <fullName evidence="1">Acyl carrier protein</fullName>
        <shortName evidence="1">ACP</shortName>
    </recommendedName>
</protein>
<reference key="1">
    <citation type="submission" date="2008-05" db="EMBL/GenBank/DDBJ databases">
        <title>Complete sequence of Shigella boydii serotype 18 strain BS512.</title>
        <authorList>
            <person name="Rasko D.A."/>
            <person name="Rosovitz M."/>
            <person name="Maurelli A.T."/>
            <person name="Myers G."/>
            <person name="Seshadri R."/>
            <person name="Cer R."/>
            <person name="Jiang L."/>
            <person name="Ravel J."/>
            <person name="Sebastian Y."/>
        </authorList>
    </citation>
    <scope>NUCLEOTIDE SEQUENCE [LARGE SCALE GENOMIC DNA]</scope>
    <source>
        <strain>CDC 3083-94 / BS512</strain>
    </source>
</reference>
<comment type="function">
    <text evidence="1">Carrier of the growing fatty acid chain in fatty acid biosynthesis.</text>
</comment>
<comment type="pathway">
    <text evidence="1">Lipid metabolism; fatty acid biosynthesis.</text>
</comment>
<comment type="subcellular location">
    <subcellularLocation>
        <location evidence="1">Cytoplasm</location>
    </subcellularLocation>
</comment>
<comment type="PTM">
    <text evidence="1">4'-phosphopantetheine is transferred from CoA to a specific serine of apo-ACP by AcpS. This modification is essential for activity because fatty acids are bound in thioester linkage to the sulfhydryl of the prosthetic group.</text>
</comment>
<comment type="similarity">
    <text evidence="1">Belongs to the acyl carrier protein (ACP) family.</text>
</comment>
<feature type="chain" id="PRO_1000139068" description="Acyl carrier protein">
    <location>
        <begin position="1"/>
        <end position="78"/>
    </location>
</feature>
<feature type="domain" description="Carrier" evidence="2">
    <location>
        <begin position="2"/>
        <end position="77"/>
    </location>
</feature>
<feature type="modified residue" description="O-(pantetheine 4'-phosphoryl)serine" evidence="2">
    <location>
        <position position="37"/>
    </location>
</feature>
<evidence type="ECO:0000255" key="1">
    <source>
        <dbReference type="HAMAP-Rule" id="MF_01217"/>
    </source>
</evidence>
<evidence type="ECO:0000255" key="2">
    <source>
        <dbReference type="PROSITE-ProRule" id="PRU00258"/>
    </source>
</evidence>
<gene>
    <name evidence="1" type="primary">acpP</name>
    <name type="ordered locus">SbBS512_E2230</name>
</gene>
<keyword id="KW-0963">Cytoplasm</keyword>
<keyword id="KW-0275">Fatty acid biosynthesis</keyword>
<keyword id="KW-0276">Fatty acid metabolism</keyword>
<keyword id="KW-0444">Lipid biosynthesis</keyword>
<keyword id="KW-0443">Lipid metabolism</keyword>
<keyword id="KW-0596">Phosphopantetheine</keyword>
<keyword id="KW-0597">Phosphoprotein</keyword>
<keyword id="KW-1185">Reference proteome</keyword>
<sequence length="78" mass="8640">MSTIEERVKKIIGEQLGVKQEEVTNNASFVEDLGADSLDTVELVMALEEEFDTEIPDEEAEKITTVQAAIDYINGHQA</sequence>
<name>ACP_SHIB3</name>
<accession>B2U527</accession>